<sequence length="67" mass="7879">MSLFPVIVVFGLSFPPIFFELLLSLAIFWLVRRMLVPTGIYDFVWHPALFNTALYCCLFYLISRLFV</sequence>
<gene>
    <name evidence="1" type="primary">aaeX</name>
    <name type="ordered locus">SeSA_A3558</name>
</gene>
<keyword id="KW-1003">Cell membrane</keyword>
<keyword id="KW-0472">Membrane</keyword>
<keyword id="KW-0812">Transmembrane</keyword>
<keyword id="KW-1133">Transmembrane helix</keyword>
<reference key="1">
    <citation type="journal article" date="2011" name="J. Bacteriol.">
        <title>Comparative genomics of 28 Salmonella enterica isolates: evidence for CRISPR-mediated adaptive sublineage evolution.</title>
        <authorList>
            <person name="Fricke W.F."/>
            <person name="Mammel M.K."/>
            <person name="McDermott P.F."/>
            <person name="Tartera C."/>
            <person name="White D.G."/>
            <person name="Leclerc J.E."/>
            <person name="Ravel J."/>
            <person name="Cebula T.A."/>
        </authorList>
    </citation>
    <scope>NUCLEOTIDE SEQUENCE [LARGE SCALE GENOMIC DNA]</scope>
    <source>
        <strain>CVM19633</strain>
    </source>
</reference>
<protein>
    <recommendedName>
        <fullName evidence="1">Protein AaeX</fullName>
    </recommendedName>
</protein>
<dbReference type="EMBL" id="CP001127">
    <property type="protein sequence ID" value="ACF92858.1"/>
    <property type="molecule type" value="Genomic_DNA"/>
</dbReference>
<dbReference type="RefSeq" id="WP_000051840.1">
    <property type="nucleotide sequence ID" value="NC_011094.1"/>
</dbReference>
<dbReference type="SMR" id="B4TX74"/>
<dbReference type="GeneID" id="45138179"/>
<dbReference type="KEGG" id="sew:SeSA_A3558"/>
<dbReference type="HOGENOM" id="CLU_188292_0_0_6"/>
<dbReference type="Proteomes" id="UP000001865">
    <property type="component" value="Chromosome"/>
</dbReference>
<dbReference type="GO" id="GO:0005886">
    <property type="term" value="C:plasma membrane"/>
    <property type="evidence" value="ECO:0007669"/>
    <property type="project" value="UniProtKB-SubCell"/>
</dbReference>
<dbReference type="HAMAP" id="MF_01546">
    <property type="entry name" value="AaeX"/>
    <property type="match status" value="1"/>
</dbReference>
<dbReference type="InterPro" id="IPR012451">
    <property type="entry name" value="DUF1656"/>
</dbReference>
<dbReference type="NCBIfam" id="NF008615">
    <property type="entry name" value="PRK11594.1"/>
    <property type="match status" value="1"/>
</dbReference>
<dbReference type="Pfam" id="PF07869">
    <property type="entry name" value="DUF1656"/>
    <property type="match status" value="1"/>
</dbReference>
<organism>
    <name type="scientific">Salmonella schwarzengrund (strain CVM19633)</name>
    <dbReference type="NCBI Taxonomy" id="439843"/>
    <lineage>
        <taxon>Bacteria</taxon>
        <taxon>Pseudomonadati</taxon>
        <taxon>Pseudomonadota</taxon>
        <taxon>Gammaproteobacteria</taxon>
        <taxon>Enterobacterales</taxon>
        <taxon>Enterobacteriaceae</taxon>
        <taxon>Salmonella</taxon>
    </lineage>
</organism>
<feature type="chain" id="PRO_1000146766" description="Protein AaeX">
    <location>
        <begin position="1"/>
        <end position="67"/>
    </location>
</feature>
<feature type="transmembrane region" description="Helical" evidence="1">
    <location>
        <begin position="3"/>
        <end position="23"/>
    </location>
</feature>
<feature type="transmembrane region" description="Helical" evidence="1">
    <location>
        <begin position="43"/>
        <end position="63"/>
    </location>
</feature>
<comment type="subcellular location">
    <subcellularLocation>
        <location evidence="1">Cell membrane</location>
        <topology evidence="1">Multi-pass membrane protein</topology>
    </subcellularLocation>
</comment>
<comment type="similarity">
    <text evidence="1">Belongs to the AaeX family.</text>
</comment>
<accession>B4TX74</accession>
<evidence type="ECO:0000255" key="1">
    <source>
        <dbReference type="HAMAP-Rule" id="MF_01546"/>
    </source>
</evidence>
<proteinExistence type="inferred from homology"/>
<name>AAEX_SALSV</name>